<reference key="1">
    <citation type="journal article" date="2009" name="Genome Res.">
        <title>Comparative genomics of protoploid Saccharomycetaceae.</title>
        <authorList>
            <consortium name="The Genolevures Consortium"/>
            <person name="Souciet J.-L."/>
            <person name="Dujon B."/>
            <person name="Gaillardin C."/>
            <person name="Johnston M."/>
            <person name="Baret P.V."/>
            <person name="Cliften P."/>
            <person name="Sherman D.J."/>
            <person name="Weissenbach J."/>
            <person name="Westhof E."/>
            <person name="Wincker P."/>
            <person name="Jubin C."/>
            <person name="Poulain J."/>
            <person name="Barbe V."/>
            <person name="Segurens B."/>
            <person name="Artiguenave F."/>
            <person name="Anthouard V."/>
            <person name="Vacherie B."/>
            <person name="Val M.-E."/>
            <person name="Fulton R.S."/>
            <person name="Minx P."/>
            <person name="Wilson R."/>
            <person name="Durrens P."/>
            <person name="Jean G."/>
            <person name="Marck C."/>
            <person name="Martin T."/>
            <person name="Nikolski M."/>
            <person name="Rolland T."/>
            <person name="Seret M.-L."/>
            <person name="Casaregola S."/>
            <person name="Despons L."/>
            <person name="Fairhead C."/>
            <person name="Fischer G."/>
            <person name="Lafontaine I."/>
            <person name="Leh V."/>
            <person name="Lemaire M."/>
            <person name="de Montigny J."/>
            <person name="Neuveglise C."/>
            <person name="Thierry A."/>
            <person name="Blanc-Lenfle I."/>
            <person name="Bleykasten C."/>
            <person name="Diffels J."/>
            <person name="Fritsch E."/>
            <person name="Frangeul L."/>
            <person name="Goeffon A."/>
            <person name="Jauniaux N."/>
            <person name="Kachouri-Lafond R."/>
            <person name="Payen C."/>
            <person name="Potier S."/>
            <person name="Pribylova L."/>
            <person name="Ozanne C."/>
            <person name="Richard G.-F."/>
            <person name="Sacerdot C."/>
            <person name="Straub M.-L."/>
            <person name="Talla E."/>
        </authorList>
    </citation>
    <scope>NUCLEOTIDE SEQUENCE [LARGE SCALE GENOMIC DNA]</scope>
    <source>
        <strain>ATCC 56472 / CBS 6340 / NRRL Y-8284</strain>
    </source>
</reference>
<organism>
    <name type="scientific">Lachancea thermotolerans (strain ATCC 56472 / CBS 6340 / NRRL Y-8284)</name>
    <name type="common">Yeast</name>
    <name type="synonym">Kluyveromyces thermotolerans</name>
    <dbReference type="NCBI Taxonomy" id="559295"/>
    <lineage>
        <taxon>Eukaryota</taxon>
        <taxon>Fungi</taxon>
        <taxon>Dikarya</taxon>
        <taxon>Ascomycota</taxon>
        <taxon>Saccharomycotina</taxon>
        <taxon>Saccharomycetes</taxon>
        <taxon>Saccharomycetales</taxon>
        <taxon>Saccharomycetaceae</taxon>
        <taxon>Lachancea</taxon>
    </lineage>
</organism>
<evidence type="ECO:0000250" key="1"/>
<evidence type="ECO:0000255" key="2"/>
<evidence type="ECO:0000256" key="3">
    <source>
        <dbReference type="SAM" id="MobiDB-lite"/>
    </source>
</evidence>
<evidence type="ECO:0000305" key="4"/>
<accession>C5DF79</accession>
<keyword id="KW-0175">Coiled coil</keyword>
<keyword id="KW-0539">Nucleus</keyword>
<keyword id="KW-1185">Reference proteome</keyword>
<keyword id="KW-0687">Ribonucleoprotein</keyword>
<keyword id="KW-0690">Ribosome biogenesis</keyword>
<keyword id="KW-0698">rRNA processing</keyword>
<feature type="chain" id="PRO_0000397636" description="rRNA biogenesis protein RRP36">
    <location>
        <begin position="1"/>
        <end position="317"/>
    </location>
</feature>
<feature type="region of interest" description="Disordered" evidence="3">
    <location>
        <begin position="1"/>
        <end position="20"/>
    </location>
</feature>
<feature type="region of interest" description="Disordered" evidence="3">
    <location>
        <begin position="54"/>
        <end position="168"/>
    </location>
</feature>
<feature type="coiled-coil region" evidence="2">
    <location>
        <begin position="220"/>
        <end position="248"/>
    </location>
</feature>
<feature type="compositionally biased region" description="Basic and acidic residues" evidence="3">
    <location>
        <begin position="54"/>
        <end position="67"/>
    </location>
</feature>
<feature type="compositionally biased region" description="Basic and acidic residues" evidence="3">
    <location>
        <begin position="82"/>
        <end position="100"/>
    </location>
</feature>
<feature type="compositionally biased region" description="Low complexity" evidence="3">
    <location>
        <begin position="101"/>
        <end position="115"/>
    </location>
</feature>
<dbReference type="EMBL" id="CU928168">
    <property type="protein sequence ID" value="CAR22834.1"/>
    <property type="molecule type" value="Genomic_DNA"/>
</dbReference>
<dbReference type="RefSeq" id="XP_002553272.1">
    <property type="nucleotide sequence ID" value="XM_002553226.1"/>
</dbReference>
<dbReference type="SMR" id="C5DF79"/>
<dbReference type="FunCoup" id="C5DF79">
    <property type="interactions" value="605"/>
</dbReference>
<dbReference type="STRING" id="559295.C5DF79"/>
<dbReference type="GeneID" id="8295512"/>
<dbReference type="KEGG" id="lth:KLTH0D12892g"/>
<dbReference type="eggNOG" id="KOG3190">
    <property type="taxonomic scope" value="Eukaryota"/>
</dbReference>
<dbReference type="HOGENOM" id="CLU_048802_3_0_1"/>
<dbReference type="InParanoid" id="C5DF79"/>
<dbReference type="OMA" id="HMKSKQR"/>
<dbReference type="OrthoDB" id="448446at2759"/>
<dbReference type="Proteomes" id="UP000002036">
    <property type="component" value="Chromosome D"/>
</dbReference>
<dbReference type="GO" id="GO:0030686">
    <property type="term" value="C:90S preribosome"/>
    <property type="evidence" value="ECO:0007669"/>
    <property type="project" value="TreeGrafter"/>
</dbReference>
<dbReference type="GO" id="GO:0005730">
    <property type="term" value="C:nucleolus"/>
    <property type="evidence" value="ECO:0007669"/>
    <property type="project" value="UniProtKB-SubCell"/>
</dbReference>
<dbReference type="GO" id="GO:0000462">
    <property type="term" value="P:maturation of SSU-rRNA from tricistronic rRNA transcript (SSU-rRNA, 5.8S rRNA, LSU-rRNA)"/>
    <property type="evidence" value="ECO:0007669"/>
    <property type="project" value="TreeGrafter"/>
</dbReference>
<dbReference type="InterPro" id="IPR009292">
    <property type="entry name" value="RRP36"/>
</dbReference>
<dbReference type="PANTHER" id="PTHR21738">
    <property type="entry name" value="RIBOSOMAL RNA PROCESSING PROTEIN 36 HOMOLOG"/>
    <property type="match status" value="1"/>
</dbReference>
<dbReference type="PANTHER" id="PTHR21738:SF0">
    <property type="entry name" value="RIBOSOMAL RNA PROCESSING PROTEIN 36 HOMOLOG"/>
    <property type="match status" value="1"/>
</dbReference>
<dbReference type="Pfam" id="PF06102">
    <property type="entry name" value="RRP36"/>
    <property type="match status" value="1"/>
</dbReference>
<protein>
    <recommendedName>
        <fullName>rRNA biogenesis protein RRP36</fullName>
    </recommendedName>
    <alternativeName>
        <fullName>Ribosomal RNA-processing protein 36</fullName>
    </alternativeName>
</protein>
<gene>
    <name type="primary">RRP36</name>
    <name type="ordered locus">KLTH0D12892g</name>
</gene>
<comment type="function">
    <text evidence="1">Component of the 90S pre-ribosome involved in the maturation of rRNAs. Required for early cleavages of the pre-RNAs in the 40S ribosomal subunit maturation pathway (By similarity).</text>
</comment>
<comment type="subunit">
    <text evidence="1">Associates with 90S and pre-40S pre-ribosomal particles.</text>
</comment>
<comment type="subcellular location">
    <subcellularLocation>
        <location evidence="1">Nucleus</location>
        <location evidence="1">Nucleolus</location>
    </subcellularLocation>
</comment>
<comment type="similarity">
    <text evidence="4">Belongs to the RRP36 family.</text>
</comment>
<sequence>MSYYFKNLKPGYESDEELEDDEILKTLSKRYADEDESASDDELSSLSFDALRRAERQLEEESRKEKAGSQNESKPALKNAKRSKEKELELADSFKAKSYTEESFGENSDSSSENEGLFEEEEVVRGNKNSKADHGKNRKKSHAPSEQSSKKKVSRIRKIPGLETPKSMNENLYQDIRFDKSLGKAEDYESIRKRYQFLDEYRQKEISELSRLLSDRKFVNKISERERDEMQEKLTSMRSKLQTLKNRDLDRKILKDYETEINKGNKTKYHLKESEKRKVIQKYKFDHMKAKQREKVMDRKRKKRLGKEFKQFSFHNR</sequence>
<name>RRP36_LACTC</name>
<proteinExistence type="inferred from homology"/>